<protein>
    <recommendedName>
        <fullName>CRISPR system endoribonuclease Csx1</fullName>
        <ecNumber>3.1.-.-</ecNumber>
    </recommendedName>
</protein>
<evidence type="ECO:0000250" key="1">
    <source>
        <dbReference type="UniProtKB" id="Q97YD5"/>
    </source>
</evidence>
<evidence type="ECO:0000305" key="2"/>
<gene>
    <name type="primary">csx1</name>
    <name type="ordered locus">MJ1666</name>
</gene>
<reference key="1">
    <citation type="journal article" date="1996" name="Science">
        <title>Complete genome sequence of the methanogenic archaeon, Methanococcus jannaschii.</title>
        <authorList>
            <person name="Bult C.J."/>
            <person name="White O."/>
            <person name="Olsen G.J."/>
            <person name="Zhou L."/>
            <person name="Fleischmann R.D."/>
            <person name="Sutton G.G."/>
            <person name="Blake J.A."/>
            <person name="FitzGerald L.M."/>
            <person name="Clayton R.A."/>
            <person name="Gocayne J.D."/>
            <person name="Kerlavage A.R."/>
            <person name="Dougherty B.A."/>
            <person name="Tomb J.-F."/>
            <person name="Adams M.D."/>
            <person name="Reich C.I."/>
            <person name="Overbeek R."/>
            <person name="Kirkness E.F."/>
            <person name="Weinstock K.G."/>
            <person name="Merrick J.M."/>
            <person name="Glodek A."/>
            <person name="Scott J.L."/>
            <person name="Geoghagen N.S.M."/>
            <person name="Weidman J.F."/>
            <person name="Fuhrmann J.L."/>
            <person name="Nguyen D."/>
            <person name="Utterback T.R."/>
            <person name="Kelley J.M."/>
            <person name="Peterson J.D."/>
            <person name="Sadow P.W."/>
            <person name="Hanna M.C."/>
            <person name="Cotton M.D."/>
            <person name="Roberts K.M."/>
            <person name="Hurst M.A."/>
            <person name="Kaine B.P."/>
            <person name="Borodovsky M."/>
            <person name="Klenk H.-P."/>
            <person name="Fraser C.M."/>
            <person name="Smith H.O."/>
            <person name="Woese C.R."/>
            <person name="Venter J.C."/>
        </authorList>
    </citation>
    <scope>NUCLEOTIDE SEQUENCE [LARGE SCALE GENOMIC DNA]</scope>
    <source>
        <strain>ATCC 43067 / DSM 2661 / JAL-1 / JCM 10045 / NBRC 100440</strain>
    </source>
</reference>
<comment type="function">
    <text evidence="1">CRISPR (clustered regularly interspaced short palindromic repeat) is an adaptive immune system that provides protection against mobile genetic elements (viruses, transposable elements and conjugative plasmids). CRISPR clusters contain spacers, sequences complementary to antecedent mobile elements, and target invading nucleic acids. CRISPR clusters are transcribed and processed into CRISPR RNA (crRNA). The type III Csm effector complex binds crRNA and acts as a crRNA-guided RNase, DNase and cyclic oligoadenylate synthase; binding of target RNA cognate to the crRNA is required for all activities.</text>
</comment>
<comment type="function">
    <text evidence="1">Activated by cyclic oligoadenylate (cOA) to endonucleolytically degrade linear RNA; when cOA levels decrease the RNase activity of Csx1 is abrogated.</text>
</comment>
<comment type="activity regulation">
    <text evidence="1">The RNase activity is stimulated by cOA.</text>
</comment>
<comment type="subunit">
    <text evidence="1">Homodimer.</text>
</comment>
<comment type="miscellaneous">
    <text evidence="2">Encoded in a type III-A CRISPR locus.</text>
</comment>
<comment type="similarity">
    <text evidence="2">Belongs to the CRISPR-associated Csx1 family.</text>
</comment>
<dbReference type="EC" id="3.1.-.-"/>
<dbReference type="EMBL" id="L77117">
    <property type="protein sequence ID" value="AAB99691.1"/>
    <property type="molecule type" value="Genomic_DNA"/>
</dbReference>
<dbReference type="PIR" id="H64507">
    <property type="entry name" value="H64507"/>
</dbReference>
<dbReference type="RefSeq" id="WP_010871190.1">
    <property type="nucleotide sequence ID" value="NC_000909.1"/>
</dbReference>
<dbReference type="SMR" id="Q59060"/>
<dbReference type="STRING" id="243232.MJ_1666"/>
<dbReference type="PaxDb" id="243232-MJ_1666"/>
<dbReference type="EnsemblBacteria" id="AAB99691">
    <property type="protein sequence ID" value="AAB99691"/>
    <property type="gene ID" value="MJ_1666"/>
</dbReference>
<dbReference type="GeneID" id="1452575"/>
<dbReference type="KEGG" id="mja:MJ_1666"/>
<dbReference type="eggNOG" id="arCOG03433">
    <property type="taxonomic scope" value="Archaea"/>
</dbReference>
<dbReference type="HOGENOM" id="CLU_044033_0_0_2"/>
<dbReference type="InParanoid" id="Q59060"/>
<dbReference type="OrthoDB" id="102285at2157"/>
<dbReference type="PhylomeDB" id="Q59060"/>
<dbReference type="Proteomes" id="UP000000805">
    <property type="component" value="Chromosome"/>
</dbReference>
<dbReference type="GO" id="GO:0004519">
    <property type="term" value="F:endonuclease activity"/>
    <property type="evidence" value="ECO:0007669"/>
    <property type="project" value="UniProtKB-KW"/>
</dbReference>
<dbReference type="GO" id="GO:0051607">
    <property type="term" value="P:defense response to virus"/>
    <property type="evidence" value="ECO:0007669"/>
    <property type="project" value="UniProtKB-KW"/>
</dbReference>
<dbReference type="CDD" id="cd09660">
    <property type="entry name" value="Csx1_III-U"/>
    <property type="match status" value="1"/>
</dbReference>
<dbReference type="Gene3D" id="3.40.50.10640">
    <property type="entry name" value="SSO1389-like"/>
    <property type="match status" value="1"/>
</dbReference>
<dbReference type="InterPro" id="IPR013383">
    <property type="entry name" value="CRISPR-assoc_prot_DxTHG_CS"/>
</dbReference>
<dbReference type="InterPro" id="IPR052875">
    <property type="entry name" value="CRISPR_assoc_ribonuclease"/>
</dbReference>
<dbReference type="InterPro" id="IPR010171">
    <property type="entry name" value="CRISPR_Csx1"/>
</dbReference>
<dbReference type="InterPro" id="IPR019016">
    <property type="entry name" value="Csx1-like_HEPN"/>
</dbReference>
<dbReference type="InterPro" id="IPR053857">
    <property type="entry name" value="Csx1_CARF"/>
</dbReference>
<dbReference type="NCBIfam" id="TIGR01897">
    <property type="entry name" value="cas_MJ1666"/>
    <property type="match status" value="1"/>
</dbReference>
<dbReference type="NCBIfam" id="TIGR02549">
    <property type="entry name" value="CRISPR_DxTHG"/>
    <property type="match status" value="1"/>
</dbReference>
<dbReference type="PANTHER" id="PTHR37169:SF1">
    <property type="entry name" value="CRISPR SYSTEM ENDORIBONUCLEASE CSX1"/>
    <property type="match status" value="1"/>
</dbReference>
<dbReference type="PANTHER" id="PTHR37169">
    <property type="entry name" value="CRISPR SYSTEM ENDORIBONUCLEASE CSX1-RELATED"/>
    <property type="match status" value="1"/>
</dbReference>
<dbReference type="Pfam" id="PF22230">
    <property type="entry name" value="Csx1_CARF"/>
    <property type="match status" value="1"/>
</dbReference>
<dbReference type="Pfam" id="PF09455">
    <property type="entry name" value="Csx1_HEPN"/>
    <property type="match status" value="1"/>
</dbReference>
<dbReference type="SUPFAM" id="SSF160980">
    <property type="entry name" value="SSO1389-like"/>
    <property type="match status" value="1"/>
</dbReference>
<organism>
    <name type="scientific">Methanocaldococcus jannaschii (strain ATCC 43067 / DSM 2661 / JAL-1 / JCM 10045 / NBRC 100440)</name>
    <name type="common">Methanococcus jannaschii</name>
    <dbReference type="NCBI Taxonomy" id="243232"/>
    <lineage>
        <taxon>Archaea</taxon>
        <taxon>Methanobacteriati</taxon>
        <taxon>Methanobacteriota</taxon>
        <taxon>Methanomada group</taxon>
        <taxon>Methanococci</taxon>
        <taxon>Methanococcales</taxon>
        <taxon>Methanocaldococcaceae</taxon>
        <taxon>Methanocaldococcus</taxon>
    </lineage>
</organism>
<keyword id="KW-0051">Antiviral defense</keyword>
<keyword id="KW-0255">Endonuclease</keyword>
<keyword id="KW-0378">Hydrolase</keyword>
<keyword id="KW-0540">Nuclease</keyword>
<keyword id="KW-1185">Reference proteome</keyword>
<accession>Q59060</accession>
<feature type="chain" id="PRO_0000107463" description="CRISPR system endoribonuclease Csx1">
    <location>
        <begin position="1"/>
        <end position="465"/>
    </location>
</feature>
<proteinExistence type="inferred from homology"/>
<name>CSX1_METJA</name>
<sequence>MQKILIAPWGNFSSWKKVIYSFNGVEKESKSSLSAIYDKINPDKVYILVLDTLSNLESENYGDIVKEVKEKTENFIKENLNIDNYEVIVCPGVGTFYNKDFEKYFKFYGNLTDYYSFALYELSKRLDGDLEVHLDLTHGLNYMPVLTYRVIKDLLEILAIKNKVRLVVYNSDPYVGREKEILNIHTVEDVIIKPSYDIKGMTLDFLDATKFVDKKEIGKIKKEINMNPKIKELRIMKQNINAFIASIVYALPLVYSTFFVKKDKIEIYLNELIGAFISNIKINPEDKILKRYLYFGEGFNSLVKAYFASKISEIPQLIKDELSLEEIDELKNTLFKENPNSQYIKNEISSLYNIINTKYKEEELSEILGNWTPIYKIRRENIDKFKIRNFLAHAGFEKSVTEIYISVENKNGKIELSEKTSLRYNKNYIEEKNGIKRFIFKYKDKNGKVEEINILEKIEEILLNK</sequence>